<protein>
    <recommendedName>
        <fullName>Putative zinc finger protein 132L</fullName>
    </recommendedName>
</protein>
<accession>O55741</accession>
<reference key="1">
    <citation type="journal article" date="2001" name="Virology">
        <title>Analysis of the first complete DNA sequence of an invertebrate iridovirus: coding strategy of the genome of Chilo iridescent virus.</title>
        <authorList>
            <person name="Jakob N.J."/>
            <person name="Mueller K."/>
            <person name="Bahr U."/>
            <person name="Darai G."/>
        </authorList>
    </citation>
    <scope>NUCLEOTIDE SEQUENCE [LARGE SCALE GENOMIC DNA]</scope>
</reference>
<reference key="2">
    <citation type="journal article" date="2007" name="Virol. J.">
        <title>Comparative genomic analysis of the family Iridoviridae: re-annotating and defining the core set of iridovirus genes.</title>
        <authorList>
            <person name="Eaton H.E."/>
            <person name="Metcalf J."/>
            <person name="Penny E."/>
            <person name="Tcherepanov V."/>
            <person name="Upton C."/>
            <person name="Brunetti C.R."/>
        </authorList>
    </citation>
    <scope>GENOME REANNOTATION</scope>
</reference>
<gene>
    <name type="ORF">IIV6-132L</name>
</gene>
<keyword id="KW-0479">Metal-binding</keyword>
<keyword id="KW-1185">Reference proteome</keyword>
<keyword id="KW-0677">Repeat</keyword>
<keyword id="KW-0862">Zinc</keyword>
<keyword id="KW-0863">Zinc-finger</keyword>
<proteinExistence type="predicted"/>
<organismHost>
    <name type="scientific">Acheta domesticus</name>
    <name type="common">House cricket</name>
    <dbReference type="NCBI Taxonomy" id="6997"/>
</organismHost>
<organismHost>
    <name type="scientific">Chilo suppressalis</name>
    <name type="common">Asiatic rice borer moth</name>
    <dbReference type="NCBI Taxonomy" id="168631"/>
</organismHost>
<organismHost>
    <name type="scientific">Gryllus bimaculatus</name>
    <name type="common">Two-spotted cricket</name>
    <dbReference type="NCBI Taxonomy" id="6999"/>
</organismHost>
<organismHost>
    <name type="scientific">Gryllus campestris</name>
    <dbReference type="NCBI Taxonomy" id="58607"/>
</organismHost>
<organismHost>
    <name type="scientific">Spodoptera frugiperda</name>
    <name type="common">Fall armyworm</name>
    <dbReference type="NCBI Taxonomy" id="7108"/>
</organismHost>
<name>132L_IIV6</name>
<sequence length="239" mass="27979">MVKQRKTKYTSLPLSSLFEDASLSTKSPKREPSQEKEIKKEEIIKKNKPCKYEEECKRSDCVFLHPGEKMPEKPKPKETERRKTRMCKYVKKCNKGKNCPFAHDESEIYIPECRYGYKCKKQGKDNEPGECKFSHPPPPPPSPPSPPPKEEIKEEIFEFEITNFPTMNGEEPVALESSPTMDFSYLAEEDFLQKFEEKKSLIEESEKHRKCTINGSIDDMMKIFETMEGQDISQYYFNF</sequence>
<dbReference type="EMBL" id="AF303741">
    <property type="protein sequence ID" value="AAB94452.1"/>
    <property type="molecule type" value="Genomic_DNA"/>
</dbReference>
<dbReference type="PIR" id="T03078">
    <property type="entry name" value="T03078"/>
</dbReference>
<dbReference type="RefSeq" id="NP_149595.1">
    <property type="nucleotide sequence ID" value="NC_003038.1"/>
</dbReference>
<dbReference type="KEGG" id="vg:1733060"/>
<dbReference type="OrthoDB" id="36560at10239"/>
<dbReference type="Proteomes" id="UP000001359">
    <property type="component" value="Genome"/>
</dbReference>
<dbReference type="GO" id="GO:0008270">
    <property type="term" value="F:zinc ion binding"/>
    <property type="evidence" value="ECO:0007669"/>
    <property type="project" value="UniProtKB-KW"/>
</dbReference>
<dbReference type="Gene3D" id="4.10.1000.40">
    <property type="match status" value="1"/>
</dbReference>
<dbReference type="InterPro" id="IPR000571">
    <property type="entry name" value="Znf_CCCH"/>
</dbReference>
<dbReference type="InterPro" id="IPR036855">
    <property type="entry name" value="Znf_CCCH_sf"/>
</dbReference>
<dbReference type="Pfam" id="PF14608">
    <property type="entry name" value="zf-CCCH_2"/>
    <property type="match status" value="1"/>
</dbReference>
<dbReference type="SMART" id="SM00356">
    <property type="entry name" value="ZnF_C3H1"/>
    <property type="match status" value="2"/>
</dbReference>
<dbReference type="SUPFAM" id="SSF90229">
    <property type="entry name" value="CCCH zinc finger"/>
    <property type="match status" value="1"/>
</dbReference>
<dbReference type="PROSITE" id="PS50103">
    <property type="entry name" value="ZF_C3H1"/>
    <property type="match status" value="2"/>
</dbReference>
<organism>
    <name type="scientific">Invertebrate iridescent virus 6</name>
    <name type="common">IIV-6</name>
    <name type="synonym">Chilo iridescent virus</name>
    <dbReference type="NCBI Taxonomy" id="176652"/>
    <lineage>
        <taxon>Viruses</taxon>
        <taxon>Varidnaviria</taxon>
        <taxon>Bamfordvirae</taxon>
        <taxon>Nucleocytoviricota</taxon>
        <taxon>Megaviricetes</taxon>
        <taxon>Pimascovirales</taxon>
        <taxon>Iridoviridae</taxon>
        <taxon>Betairidovirinae</taxon>
        <taxon>Iridovirus</taxon>
    </lineage>
</organism>
<evidence type="ECO:0000255" key="1">
    <source>
        <dbReference type="PROSITE-ProRule" id="PRU00723"/>
    </source>
</evidence>
<evidence type="ECO:0000256" key="2">
    <source>
        <dbReference type="SAM" id="MobiDB-lite"/>
    </source>
</evidence>
<feature type="chain" id="PRO_0000378003" description="Putative zinc finger protein 132L">
    <location>
        <begin position="1"/>
        <end position="239"/>
    </location>
</feature>
<feature type="zinc finger region" description="C3H1-type 1" evidence="1">
    <location>
        <begin position="44"/>
        <end position="68"/>
    </location>
</feature>
<feature type="zinc finger region" description="C3H1-type 2" evidence="1">
    <location>
        <begin position="81"/>
        <end position="106"/>
    </location>
</feature>
<feature type="region of interest" description="Disordered" evidence="2">
    <location>
        <begin position="20"/>
        <end position="40"/>
    </location>
</feature>
<feature type="region of interest" description="Disordered" evidence="2">
    <location>
        <begin position="128"/>
        <end position="151"/>
    </location>
</feature>
<feature type="compositionally biased region" description="Basic and acidic residues" evidence="2">
    <location>
        <begin position="28"/>
        <end position="40"/>
    </location>
</feature>
<feature type="compositionally biased region" description="Pro residues" evidence="2">
    <location>
        <begin position="135"/>
        <end position="147"/>
    </location>
</feature>